<sequence length="357" mass="40312">MFAKLENLERRFEDLEQQLASSEVFNDQDRYRKLTKAHADLKEVVDVFRRYKELRQNLADNKELLDDADPEIRSMAHEEAKSLESAIPEIEQELQLLLLPKDPLDEKNTIVEIRAGTGGEEAALFAADLFRMYSRYAEIRGWKVEILSANESDTGGYKEVIALIVGDKVYSRLKFESGTHRVQRVPATESQGRIHTSAATVAILPEAEEVDVEIRPDDIRIDVFRASGAGGQHVNKTESAVRITHMPSGIVVSCQDEKSQHKNKAKAMKVLASRLLQAEQDRQHNEMAADRRSQVGSGDRSERIRTYNFPQGRVTDHRINLTLYSLDRVMEGEAQALFDALSTHAQTEALKAQADVQ</sequence>
<dbReference type="EMBL" id="CP001197">
    <property type="protein sequence ID" value="ACL08392.1"/>
    <property type="molecule type" value="Genomic_DNA"/>
</dbReference>
<dbReference type="SMR" id="B8DLL6"/>
<dbReference type="STRING" id="883.DvMF_1444"/>
<dbReference type="KEGG" id="dvm:DvMF_1444"/>
<dbReference type="eggNOG" id="COG0216">
    <property type="taxonomic scope" value="Bacteria"/>
</dbReference>
<dbReference type="HOGENOM" id="CLU_036856_0_1_7"/>
<dbReference type="OrthoDB" id="9806673at2"/>
<dbReference type="GO" id="GO:0005737">
    <property type="term" value="C:cytoplasm"/>
    <property type="evidence" value="ECO:0007669"/>
    <property type="project" value="UniProtKB-SubCell"/>
</dbReference>
<dbReference type="GO" id="GO:0016149">
    <property type="term" value="F:translation release factor activity, codon specific"/>
    <property type="evidence" value="ECO:0007669"/>
    <property type="project" value="UniProtKB-UniRule"/>
</dbReference>
<dbReference type="FunFam" id="3.30.160.20:FF:000004">
    <property type="entry name" value="Peptide chain release factor 1"/>
    <property type="match status" value="1"/>
</dbReference>
<dbReference type="FunFam" id="3.30.70.1660:FF:000002">
    <property type="entry name" value="Peptide chain release factor 1"/>
    <property type="match status" value="1"/>
</dbReference>
<dbReference type="FunFam" id="3.30.70.1660:FF:000004">
    <property type="entry name" value="Peptide chain release factor 1"/>
    <property type="match status" value="1"/>
</dbReference>
<dbReference type="Gene3D" id="3.30.160.20">
    <property type="match status" value="1"/>
</dbReference>
<dbReference type="Gene3D" id="3.30.70.1660">
    <property type="match status" value="2"/>
</dbReference>
<dbReference type="Gene3D" id="6.10.140.1950">
    <property type="match status" value="1"/>
</dbReference>
<dbReference type="HAMAP" id="MF_00093">
    <property type="entry name" value="Rel_fac_1"/>
    <property type="match status" value="1"/>
</dbReference>
<dbReference type="InterPro" id="IPR005139">
    <property type="entry name" value="PCRF"/>
</dbReference>
<dbReference type="InterPro" id="IPR000352">
    <property type="entry name" value="Pep_chain_release_fac_I"/>
</dbReference>
<dbReference type="InterPro" id="IPR045853">
    <property type="entry name" value="Pep_chain_release_fac_I_sf"/>
</dbReference>
<dbReference type="InterPro" id="IPR050057">
    <property type="entry name" value="Prokaryotic/Mito_RF"/>
</dbReference>
<dbReference type="InterPro" id="IPR004373">
    <property type="entry name" value="RF-1"/>
</dbReference>
<dbReference type="NCBIfam" id="TIGR00019">
    <property type="entry name" value="prfA"/>
    <property type="match status" value="1"/>
</dbReference>
<dbReference type="NCBIfam" id="NF001859">
    <property type="entry name" value="PRK00591.1"/>
    <property type="match status" value="1"/>
</dbReference>
<dbReference type="PANTHER" id="PTHR43804">
    <property type="entry name" value="LD18447P"/>
    <property type="match status" value="1"/>
</dbReference>
<dbReference type="PANTHER" id="PTHR43804:SF7">
    <property type="entry name" value="LD18447P"/>
    <property type="match status" value="1"/>
</dbReference>
<dbReference type="Pfam" id="PF03462">
    <property type="entry name" value="PCRF"/>
    <property type="match status" value="1"/>
</dbReference>
<dbReference type="Pfam" id="PF00472">
    <property type="entry name" value="RF-1"/>
    <property type="match status" value="1"/>
</dbReference>
<dbReference type="SMART" id="SM00937">
    <property type="entry name" value="PCRF"/>
    <property type="match status" value="1"/>
</dbReference>
<dbReference type="SUPFAM" id="SSF75620">
    <property type="entry name" value="Release factor"/>
    <property type="match status" value="1"/>
</dbReference>
<dbReference type="PROSITE" id="PS00745">
    <property type="entry name" value="RF_PROK_I"/>
    <property type="match status" value="1"/>
</dbReference>
<gene>
    <name evidence="1" type="primary">prfA</name>
    <name type="ordered locus">DvMF_1444</name>
</gene>
<name>RF1_NITV9</name>
<reference key="1">
    <citation type="submission" date="2008-10" db="EMBL/GenBank/DDBJ databases">
        <title>Complete sequence of Desulfovibrio vulgaris str. 'Miyazaki F'.</title>
        <authorList>
            <person name="Lucas S."/>
            <person name="Copeland A."/>
            <person name="Lapidus A."/>
            <person name="Glavina del Rio T."/>
            <person name="Dalin E."/>
            <person name="Tice H."/>
            <person name="Bruce D."/>
            <person name="Goodwin L."/>
            <person name="Pitluck S."/>
            <person name="Sims D."/>
            <person name="Brettin T."/>
            <person name="Detter J.C."/>
            <person name="Han C."/>
            <person name="Larimer F."/>
            <person name="Land M."/>
            <person name="Hauser L."/>
            <person name="Kyrpides N."/>
            <person name="Mikhailova N."/>
            <person name="Hazen T.C."/>
            <person name="Richardson P."/>
        </authorList>
    </citation>
    <scope>NUCLEOTIDE SEQUENCE [LARGE SCALE GENOMIC DNA]</scope>
    <source>
        <strain>DSM 19637 / Miyazaki F</strain>
    </source>
</reference>
<feature type="chain" id="PRO_1000117235" description="Peptide chain release factor 1">
    <location>
        <begin position="1"/>
        <end position="357"/>
    </location>
</feature>
<feature type="region of interest" description="Disordered" evidence="2">
    <location>
        <begin position="281"/>
        <end position="309"/>
    </location>
</feature>
<feature type="compositionally biased region" description="Basic and acidic residues" evidence="2">
    <location>
        <begin position="281"/>
        <end position="305"/>
    </location>
</feature>
<feature type="modified residue" description="N5-methylglutamine" evidence="1">
    <location>
        <position position="232"/>
    </location>
</feature>
<protein>
    <recommendedName>
        <fullName evidence="1">Peptide chain release factor 1</fullName>
        <shortName evidence="1">RF-1</shortName>
    </recommendedName>
</protein>
<keyword id="KW-0963">Cytoplasm</keyword>
<keyword id="KW-0488">Methylation</keyword>
<keyword id="KW-0648">Protein biosynthesis</keyword>
<accession>B8DLL6</accession>
<organism>
    <name type="scientific">Nitratidesulfovibrio vulgaris (strain DSM 19637 / Miyazaki F)</name>
    <name type="common">Desulfovibrio vulgaris</name>
    <dbReference type="NCBI Taxonomy" id="883"/>
    <lineage>
        <taxon>Bacteria</taxon>
        <taxon>Pseudomonadati</taxon>
        <taxon>Thermodesulfobacteriota</taxon>
        <taxon>Desulfovibrionia</taxon>
        <taxon>Desulfovibrionales</taxon>
        <taxon>Desulfovibrionaceae</taxon>
        <taxon>Nitratidesulfovibrio</taxon>
    </lineage>
</organism>
<proteinExistence type="inferred from homology"/>
<comment type="function">
    <text evidence="1">Peptide chain release factor 1 directs the termination of translation in response to the peptide chain termination codons UAG and UAA.</text>
</comment>
<comment type="subcellular location">
    <subcellularLocation>
        <location evidence="1">Cytoplasm</location>
    </subcellularLocation>
</comment>
<comment type="PTM">
    <text evidence="1">Methylated by PrmC. Methylation increases the termination efficiency of RF1.</text>
</comment>
<comment type="similarity">
    <text evidence="1">Belongs to the prokaryotic/mitochondrial release factor family.</text>
</comment>
<evidence type="ECO:0000255" key="1">
    <source>
        <dbReference type="HAMAP-Rule" id="MF_00093"/>
    </source>
</evidence>
<evidence type="ECO:0000256" key="2">
    <source>
        <dbReference type="SAM" id="MobiDB-lite"/>
    </source>
</evidence>